<name>CC134_RAT</name>
<gene>
    <name type="primary">Ccdc134</name>
</gene>
<keyword id="KW-0175">Coiled coil</keyword>
<keyword id="KW-0963">Cytoplasm</keyword>
<keyword id="KW-0256">Endoplasmic reticulum</keyword>
<keyword id="KW-0325">Glycoprotein</keyword>
<keyword id="KW-0539">Nucleus</keyword>
<keyword id="KW-1185">Reference proteome</keyword>
<keyword id="KW-0964">Secreted</keyword>
<keyword id="KW-0732">Signal</keyword>
<accession>Q5M862</accession>
<feature type="signal peptide" evidence="1">
    <location>
        <begin position="1"/>
        <end position="22"/>
    </location>
</feature>
<feature type="chain" id="PRO_0000254111" description="Coiled-coil domain-containing protein 134">
    <location>
        <begin position="23"/>
        <end position="229"/>
    </location>
</feature>
<feature type="region of interest" description="Disordered" evidence="3">
    <location>
        <begin position="191"/>
        <end position="229"/>
    </location>
</feature>
<feature type="coiled-coil region" evidence="2">
    <location>
        <begin position="196"/>
        <end position="218"/>
    </location>
</feature>
<feature type="short sequence motif" description="Prevents secretion from ER" evidence="1">
    <location>
        <begin position="226"/>
        <end position="229"/>
    </location>
</feature>
<feature type="glycosylation site" description="N-linked (GlcNAc...) asparagine" evidence="2">
    <location>
        <position position="148"/>
    </location>
</feature>
<organism>
    <name type="scientific">Rattus norvegicus</name>
    <name type="common">Rat</name>
    <dbReference type="NCBI Taxonomy" id="10116"/>
    <lineage>
        <taxon>Eukaryota</taxon>
        <taxon>Metazoa</taxon>
        <taxon>Chordata</taxon>
        <taxon>Craniata</taxon>
        <taxon>Vertebrata</taxon>
        <taxon>Euteleostomi</taxon>
        <taxon>Mammalia</taxon>
        <taxon>Eutheria</taxon>
        <taxon>Euarchontoglires</taxon>
        <taxon>Glires</taxon>
        <taxon>Rodentia</taxon>
        <taxon>Myomorpha</taxon>
        <taxon>Muroidea</taxon>
        <taxon>Muridae</taxon>
        <taxon>Murinae</taxon>
        <taxon>Rattus</taxon>
    </lineage>
</organism>
<comment type="function">
    <text evidence="1">Molecular adapter required to prevent protein hyperglycosylation of HSP90B1: during translation, associates with nascent HSP90B1 and the STT3A catalytic component of the OST-A complex and tethers them to a specialized translocon that forms a microenvironment for HSP90B1 folding. In the CCDC134-containing translocon, STT3A associates with the SRT pseudosubstrate motif of HSP90B1, preventing access to facultative glycosylation sites until folding is completed, preventing hyperglycosylation and subsequent degradation of HSP90B1. In extracellular secreted form, promotes proliferation and activation of CD8(+) T-cells, suggesting a cytokine-like function. May inhibit ERK and JNK signaling activity. May suppress cell migration and invasion activity, via its effects on ERK and JNK signaling. May also localize in the nucleus: enhances stability of the PCAF histone acetyltransferase (HAT) complex member TADA2A and thus promotes PCAF-mediated histone acetyltransferase activity. Has a critical role in the regulation of osteogenesis and bone development.</text>
</comment>
<comment type="subunit">
    <text evidence="1">Interacts with TADA2A. Associates with the PCAF complex via TADA2A binding.</text>
</comment>
<comment type="subcellular location">
    <subcellularLocation>
        <location evidence="1">Endoplasmic reticulum lumen</location>
    </subcellularLocation>
    <subcellularLocation>
        <location evidence="1">Secreted</location>
    </subcellularLocation>
    <subcellularLocation>
        <location evidence="1">Cytoplasm</location>
    </subcellularLocation>
    <subcellularLocation>
        <location evidence="1">Nucleus</location>
    </subcellularLocation>
    <text evidence="1">Mainly localizes to the endoplasmic reticulum. Accumulates in the nucleus in response to UV irradiation.</text>
</comment>
<comment type="PTM">
    <text evidence="1">O-glycosylated, with additional sialic acid modifications.</text>
</comment>
<comment type="similarity">
    <text evidence="4">Belongs to the CCDC134 family.</text>
</comment>
<proteinExistence type="evidence at transcript level"/>
<evidence type="ECO:0000250" key="1">
    <source>
        <dbReference type="UniProtKB" id="Q9H6E4"/>
    </source>
</evidence>
<evidence type="ECO:0000255" key="2"/>
<evidence type="ECO:0000256" key="3">
    <source>
        <dbReference type="SAM" id="MobiDB-lite"/>
    </source>
</evidence>
<evidence type="ECO:0000305" key="4"/>
<reference key="1">
    <citation type="journal article" date="2004" name="Genome Res.">
        <title>The status, quality, and expansion of the NIH full-length cDNA project: the Mammalian Gene Collection (MGC).</title>
        <authorList>
            <consortium name="The MGC Project Team"/>
        </authorList>
    </citation>
    <scope>NUCLEOTIDE SEQUENCE [LARGE SCALE MRNA]</scope>
    <source>
        <tissue>Thymus</tissue>
    </source>
</reference>
<protein>
    <recommendedName>
        <fullName>Coiled-coil domain-containing protein 134</fullName>
    </recommendedName>
</protein>
<sequence>MDLLQSLAVFFVLLLPGTEVTGTLKSTLDPSLKIYKKMFEVKRREQLLALKNLAQLNDIHQQYKILDVMLKGLFKVLEDSRTVLIAADVLPDGPLPQDEKLKDAFSHVVENTAFFGDVVLRFPKIVHHYFDHNSNWNLLIRWGISFCNQTGVFDQGPHSPVLSLMAQELGITEKDSDFQNPFTIDRTEFIPSTDPFQKALREEEKRRKKEEKRKEIRKGPRISRSQSEL</sequence>
<dbReference type="EMBL" id="BC088206">
    <property type="protein sequence ID" value="AAH88206.1"/>
    <property type="molecule type" value="mRNA"/>
</dbReference>
<dbReference type="RefSeq" id="NP_001019526.1">
    <property type="nucleotide sequence ID" value="NM_001024355.1"/>
</dbReference>
<dbReference type="RefSeq" id="XP_006242175.1">
    <property type="nucleotide sequence ID" value="XM_006242113.3"/>
</dbReference>
<dbReference type="FunCoup" id="Q5M862">
    <property type="interactions" value="813"/>
</dbReference>
<dbReference type="STRING" id="10116.ENSRNOP00000052900"/>
<dbReference type="PhosphoSitePlus" id="Q5M862"/>
<dbReference type="PaxDb" id="10116-ENSRNOP00000052900"/>
<dbReference type="Ensembl" id="ENSRNOT00000056048.5">
    <property type="protein sequence ID" value="ENSRNOP00000052900.2"/>
    <property type="gene ID" value="ENSRNOG00000007262.8"/>
</dbReference>
<dbReference type="GeneID" id="500909"/>
<dbReference type="KEGG" id="rno:500909"/>
<dbReference type="UCSC" id="RGD:1559657">
    <property type="organism name" value="rat"/>
</dbReference>
<dbReference type="AGR" id="RGD:1559657"/>
<dbReference type="CTD" id="79879"/>
<dbReference type="RGD" id="1559657">
    <property type="gene designation" value="Ccdc134"/>
</dbReference>
<dbReference type="eggNOG" id="ENOG502QVE7">
    <property type="taxonomic scope" value="Eukaryota"/>
</dbReference>
<dbReference type="GeneTree" id="ENSGT00390000020164"/>
<dbReference type="HOGENOM" id="CLU_099195_0_0_1"/>
<dbReference type="InParanoid" id="Q5M862"/>
<dbReference type="OMA" id="GIGFCNQ"/>
<dbReference type="OrthoDB" id="5854099at2759"/>
<dbReference type="PhylomeDB" id="Q5M862"/>
<dbReference type="TreeFam" id="TF323839"/>
<dbReference type="PRO" id="PR:Q5M862"/>
<dbReference type="Proteomes" id="UP000002494">
    <property type="component" value="Chromosome 7"/>
</dbReference>
<dbReference type="Bgee" id="ENSRNOG00000007262">
    <property type="expression patterns" value="Expressed in pancreas and 20 other cell types or tissues"/>
</dbReference>
<dbReference type="GO" id="GO:0005829">
    <property type="term" value="C:cytosol"/>
    <property type="evidence" value="ECO:0007669"/>
    <property type="project" value="Ensembl"/>
</dbReference>
<dbReference type="GO" id="GO:0005788">
    <property type="term" value="C:endoplasmic reticulum lumen"/>
    <property type="evidence" value="ECO:0000250"/>
    <property type="project" value="UniProtKB"/>
</dbReference>
<dbReference type="GO" id="GO:0005576">
    <property type="term" value="C:extracellular region"/>
    <property type="evidence" value="ECO:0007669"/>
    <property type="project" value="UniProtKB-SubCell"/>
</dbReference>
<dbReference type="GO" id="GO:0005634">
    <property type="term" value="C:nucleus"/>
    <property type="evidence" value="ECO:0007669"/>
    <property type="project" value="UniProtKB-SubCell"/>
</dbReference>
<dbReference type="GO" id="GO:0030674">
    <property type="term" value="F:protein-macromolecule adaptor activity"/>
    <property type="evidence" value="ECO:0000250"/>
    <property type="project" value="UniProtKB"/>
</dbReference>
<dbReference type="GO" id="GO:0001525">
    <property type="term" value="P:angiogenesis"/>
    <property type="evidence" value="ECO:0000266"/>
    <property type="project" value="RGD"/>
</dbReference>
<dbReference type="GO" id="GO:0035162">
    <property type="term" value="P:embryonic hemopoiesis"/>
    <property type="evidence" value="ECO:0000266"/>
    <property type="project" value="RGD"/>
</dbReference>
<dbReference type="GO" id="GO:1990402">
    <property type="term" value="P:embryonic liver development"/>
    <property type="evidence" value="ECO:0000266"/>
    <property type="project" value="RGD"/>
</dbReference>
<dbReference type="GO" id="GO:0001890">
    <property type="term" value="P:placenta development"/>
    <property type="evidence" value="ECO:0000266"/>
    <property type="project" value="RGD"/>
</dbReference>
<dbReference type="GO" id="GO:0034126">
    <property type="term" value="P:positive regulation of MyD88-dependent toll-like receptor signaling pathway"/>
    <property type="evidence" value="ECO:0000250"/>
    <property type="project" value="UniProtKB"/>
</dbReference>
<dbReference type="GO" id="GO:0030177">
    <property type="term" value="P:positive regulation of Wnt signaling pathway"/>
    <property type="evidence" value="ECO:0000250"/>
    <property type="project" value="UniProtKB"/>
</dbReference>
<dbReference type="GO" id="GO:0030278">
    <property type="term" value="P:regulation of ossification"/>
    <property type="evidence" value="ECO:0000266"/>
    <property type="project" value="RGD"/>
</dbReference>
<dbReference type="GO" id="GO:0060049">
    <property type="term" value="P:regulation of protein glycosylation"/>
    <property type="evidence" value="ECO:0000250"/>
    <property type="project" value="UniProtKB"/>
</dbReference>
<dbReference type="GO" id="GO:0021591">
    <property type="term" value="P:ventricular system development"/>
    <property type="evidence" value="ECO:0000266"/>
    <property type="project" value="RGD"/>
</dbReference>
<dbReference type="InterPro" id="IPR026321">
    <property type="entry name" value="Coiled-coil_dom_con_pro_134"/>
</dbReference>
<dbReference type="PANTHER" id="PTHR14735">
    <property type="entry name" value="COILED-COIL DOMAIN-CONTAINING PROTEIN 134"/>
    <property type="match status" value="1"/>
</dbReference>
<dbReference type="PANTHER" id="PTHR14735:SF1">
    <property type="entry name" value="COILED-COIL DOMAIN-CONTAINING PROTEIN 134"/>
    <property type="match status" value="1"/>
</dbReference>
<dbReference type="Pfam" id="PF15002">
    <property type="entry name" value="ERK-JNK_inhib"/>
    <property type="match status" value="1"/>
</dbReference>